<accession>O78703</accession>
<sequence length="318" mass="35796">MFLINLLIYIIPILLAVAFLTLIERKVLGYMQLRKGPNVIGPYGILQPFADAVKLFTKEPLRPLTSSISMFIIAPILALTLALTIWTPLPMPHTLIDLNLGLLFILSLSGLSVYSILWSGWASNSKYALIGALRAVAQTISYEVTLAIILLSIMLINGSFTLKNLMITQENMWLIMTAWPLTMMWYISTLAETNRAPFDLTEGESELVSGFNVEYAAGPFAMFFLAEYANIMAMNAMTTILFLGPPLNHNHTYTCTISFMFKTMLLTSAFLWVRASYPRFRYDQLMYLLWKSFLPITLALCLMFISIPIALSSIPPQM</sequence>
<protein>
    <recommendedName>
        <fullName>NADH-ubiquinone oxidoreductase chain 1</fullName>
        <ecNumber>7.1.1.2</ecNumber>
    </recommendedName>
    <alternativeName>
        <fullName>NADH dehydrogenase subunit 1</fullName>
    </alternativeName>
</protein>
<geneLocation type="mitochondrion"/>
<name>NU1M_MONDO</name>
<reference key="1">
    <citation type="journal article" date="1998" name="J. Mol. Evol.">
        <title>Conflict among individual mitochondrial proteins in resolving the phylogeny of eutherian orders.</title>
        <authorList>
            <person name="Cao Y."/>
            <person name="Janke A."/>
            <person name="Waddell P.J."/>
            <person name="Westerman M."/>
            <person name="Takenaka O."/>
            <person name="Murata S."/>
            <person name="Okada N."/>
            <person name="Paeaebo S."/>
            <person name="Hasegawa M."/>
        </authorList>
    </citation>
    <scope>NUCLEOTIDE SEQUENCE [GENOMIC DNA]</scope>
    <source>
        <tissue>Muscle</tissue>
    </source>
</reference>
<dbReference type="EC" id="7.1.1.2"/>
<dbReference type="EMBL" id="AB011220">
    <property type="protein sequence ID" value="BAA32112.1"/>
    <property type="molecule type" value="Genomic_DNA"/>
</dbReference>
<dbReference type="RefSeq" id="YP_087179.1">
    <property type="nucleotide sequence ID" value="NC_006299.1"/>
</dbReference>
<dbReference type="SMR" id="O78703"/>
<dbReference type="FunCoup" id="O78703">
    <property type="interactions" value="167"/>
</dbReference>
<dbReference type="STRING" id="13616.ENSMODP00000026931"/>
<dbReference type="Ensembl" id="ENSMODT00000027417.2">
    <property type="protein sequence ID" value="ENSMODP00000026931.1"/>
    <property type="gene ID" value="ENSMODG00000021562.2"/>
</dbReference>
<dbReference type="GeneID" id="3074661"/>
<dbReference type="KEGG" id="mdo:3074661"/>
<dbReference type="CTD" id="4535"/>
<dbReference type="eggNOG" id="KOG4770">
    <property type="taxonomic scope" value="Eukaryota"/>
</dbReference>
<dbReference type="GeneTree" id="ENSGT00390000006621"/>
<dbReference type="HOGENOM" id="CLU_015134_0_1_1"/>
<dbReference type="InParanoid" id="O78703"/>
<dbReference type="OMA" id="WSGWASN"/>
<dbReference type="TreeFam" id="TF352957"/>
<dbReference type="Proteomes" id="UP000002280">
    <property type="component" value="Mitochondrion"/>
</dbReference>
<dbReference type="Bgee" id="ENSMODG00000021562">
    <property type="expression patterns" value="Expressed in skeletal muscle tissue and 19 other cell types or tissues"/>
</dbReference>
<dbReference type="GO" id="GO:0005743">
    <property type="term" value="C:mitochondrial inner membrane"/>
    <property type="evidence" value="ECO:0007669"/>
    <property type="project" value="UniProtKB-SubCell"/>
</dbReference>
<dbReference type="GO" id="GO:0045271">
    <property type="term" value="C:respiratory chain complex I"/>
    <property type="evidence" value="ECO:0000318"/>
    <property type="project" value="GO_Central"/>
</dbReference>
<dbReference type="GO" id="GO:0008137">
    <property type="term" value="F:NADH dehydrogenase (ubiquinone) activity"/>
    <property type="evidence" value="ECO:0007669"/>
    <property type="project" value="UniProtKB-EC"/>
</dbReference>
<dbReference type="GO" id="GO:0009060">
    <property type="term" value="P:aerobic respiration"/>
    <property type="evidence" value="ECO:0000318"/>
    <property type="project" value="GO_Central"/>
</dbReference>
<dbReference type="HAMAP" id="MF_01350">
    <property type="entry name" value="NDH1_NuoH"/>
    <property type="match status" value="1"/>
</dbReference>
<dbReference type="InterPro" id="IPR001694">
    <property type="entry name" value="NADH_UbQ_OxRdtase_su1/FPO"/>
</dbReference>
<dbReference type="InterPro" id="IPR018086">
    <property type="entry name" value="NADH_UbQ_OxRdtase_su1_CS"/>
</dbReference>
<dbReference type="PANTHER" id="PTHR11432">
    <property type="entry name" value="NADH DEHYDROGENASE SUBUNIT 1"/>
    <property type="match status" value="1"/>
</dbReference>
<dbReference type="PANTHER" id="PTHR11432:SF3">
    <property type="entry name" value="NADH-UBIQUINONE OXIDOREDUCTASE CHAIN 1"/>
    <property type="match status" value="1"/>
</dbReference>
<dbReference type="Pfam" id="PF00146">
    <property type="entry name" value="NADHdh"/>
    <property type="match status" value="1"/>
</dbReference>
<dbReference type="PROSITE" id="PS00667">
    <property type="entry name" value="COMPLEX1_ND1_1"/>
    <property type="match status" value="1"/>
</dbReference>
<dbReference type="PROSITE" id="PS00668">
    <property type="entry name" value="COMPLEX1_ND1_2"/>
    <property type="match status" value="1"/>
</dbReference>
<proteinExistence type="inferred from homology"/>
<keyword id="KW-0249">Electron transport</keyword>
<keyword id="KW-0472">Membrane</keyword>
<keyword id="KW-0496">Mitochondrion</keyword>
<keyword id="KW-0999">Mitochondrion inner membrane</keyword>
<keyword id="KW-0520">NAD</keyword>
<keyword id="KW-1185">Reference proteome</keyword>
<keyword id="KW-0679">Respiratory chain</keyword>
<keyword id="KW-1278">Translocase</keyword>
<keyword id="KW-0812">Transmembrane</keyword>
<keyword id="KW-1133">Transmembrane helix</keyword>
<keyword id="KW-0813">Transport</keyword>
<keyword id="KW-0830">Ubiquinone</keyword>
<evidence type="ECO:0000250" key="1"/>
<evidence type="ECO:0000255" key="2"/>
<evidence type="ECO:0000305" key="3"/>
<comment type="function">
    <text evidence="1">Core subunit of the mitochondrial membrane respiratory chain NADH dehydrogenase (Complex I) that is believed to belong to the minimal assembly required for catalysis. Complex I functions in the transfer of electrons from NADH to the respiratory chain. The immediate electron acceptor for the enzyme is believed to be ubiquinone (By similarity).</text>
</comment>
<comment type="catalytic activity">
    <reaction>
        <text>a ubiquinone + NADH + 5 H(+)(in) = a ubiquinol + NAD(+) + 4 H(+)(out)</text>
        <dbReference type="Rhea" id="RHEA:29091"/>
        <dbReference type="Rhea" id="RHEA-COMP:9565"/>
        <dbReference type="Rhea" id="RHEA-COMP:9566"/>
        <dbReference type="ChEBI" id="CHEBI:15378"/>
        <dbReference type="ChEBI" id="CHEBI:16389"/>
        <dbReference type="ChEBI" id="CHEBI:17976"/>
        <dbReference type="ChEBI" id="CHEBI:57540"/>
        <dbReference type="ChEBI" id="CHEBI:57945"/>
        <dbReference type="EC" id="7.1.1.2"/>
    </reaction>
</comment>
<comment type="subcellular location">
    <subcellularLocation>
        <location evidence="1">Mitochondrion inner membrane</location>
        <topology evidence="1">Multi-pass membrane protein</topology>
    </subcellularLocation>
</comment>
<comment type="similarity">
    <text evidence="3">Belongs to the complex I subunit 1 family.</text>
</comment>
<gene>
    <name type="primary">MT-ND1</name>
    <name type="synonym">MTND1</name>
    <name type="synonym">NADH1</name>
    <name type="synonym">ND1</name>
</gene>
<organism>
    <name type="scientific">Monodelphis domestica</name>
    <name type="common">Gray short-tailed opossum</name>
    <dbReference type="NCBI Taxonomy" id="13616"/>
    <lineage>
        <taxon>Eukaryota</taxon>
        <taxon>Metazoa</taxon>
        <taxon>Chordata</taxon>
        <taxon>Craniata</taxon>
        <taxon>Vertebrata</taxon>
        <taxon>Euteleostomi</taxon>
        <taxon>Mammalia</taxon>
        <taxon>Metatheria</taxon>
        <taxon>Didelphimorphia</taxon>
        <taxon>Didelphidae</taxon>
        <taxon>Monodelphis</taxon>
    </lineage>
</organism>
<feature type="chain" id="PRO_0000117430" description="NADH-ubiquinone oxidoreductase chain 1">
    <location>
        <begin position="1"/>
        <end position="318"/>
    </location>
</feature>
<feature type="transmembrane region" description="Helical" evidence="2">
    <location>
        <begin position="3"/>
        <end position="23"/>
    </location>
</feature>
<feature type="transmembrane region" description="Helical" evidence="2">
    <location>
        <begin position="68"/>
        <end position="88"/>
    </location>
</feature>
<feature type="transmembrane region" description="Helical" evidence="2">
    <location>
        <begin position="100"/>
        <end position="120"/>
    </location>
</feature>
<feature type="transmembrane region" description="Helical" evidence="2">
    <location>
        <begin position="136"/>
        <end position="156"/>
    </location>
</feature>
<feature type="transmembrane region" description="Helical" evidence="2">
    <location>
        <begin position="172"/>
        <end position="192"/>
    </location>
</feature>
<feature type="transmembrane region" description="Helical" evidence="2">
    <location>
        <begin position="223"/>
        <end position="243"/>
    </location>
</feature>
<feature type="transmembrane region" description="Helical" evidence="2">
    <location>
        <begin position="253"/>
        <end position="273"/>
    </location>
</feature>
<feature type="transmembrane region" description="Helical" evidence="2">
    <location>
        <begin position="294"/>
        <end position="314"/>
    </location>
</feature>